<feature type="signal peptide" evidence="1">
    <location>
        <begin position="1"/>
        <end position="21"/>
    </location>
</feature>
<feature type="chain" id="PRO_0000041804" description="Flagellar P-ring protein">
    <location>
        <begin position="22"/>
        <end position="367"/>
    </location>
</feature>
<gene>
    <name evidence="1" type="primary">flgI</name>
    <name type="ordered locus">SCH_1128</name>
</gene>
<dbReference type="EMBL" id="AE017220">
    <property type="protein sequence ID" value="AAX65034.1"/>
    <property type="molecule type" value="Genomic_DNA"/>
</dbReference>
<dbReference type="SMR" id="Q57QH7"/>
<dbReference type="KEGG" id="sec:SCH_1128"/>
<dbReference type="HOGENOM" id="CLU_045235_1_0_6"/>
<dbReference type="Proteomes" id="UP000000538">
    <property type="component" value="Chromosome"/>
</dbReference>
<dbReference type="GO" id="GO:0009428">
    <property type="term" value="C:bacterial-type flagellum basal body, distal rod, P ring"/>
    <property type="evidence" value="ECO:0007669"/>
    <property type="project" value="InterPro"/>
</dbReference>
<dbReference type="GO" id="GO:0030288">
    <property type="term" value="C:outer membrane-bounded periplasmic space"/>
    <property type="evidence" value="ECO:0007669"/>
    <property type="project" value="InterPro"/>
</dbReference>
<dbReference type="GO" id="GO:0005198">
    <property type="term" value="F:structural molecule activity"/>
    <property type="evidence" value="ECO:0007669"/>
    <property type="project" value="InterPro"/>
</dbReference>
<dbReference type="GO" id="GO:0071973">
    <property type="term" value="P:bacterial-type flagellum-dependent cell motility"/>
    <property type="evidence" value="ECO:0007669"/>
    <property type="project" value="InterPro"/>
</dbReference>
<dbReference type="HAMAP" id="MF_00416">
    <property type="entry name" value="FlgI"/>
    <property type="match status" value="1"/>
</dbReference>
<dbReference type="InterPro" id="IPR001782">
    <property type="entry name" value="Flag_FlgI"/>
</dbReference>
<dbReference type="NCBIfam" id="NF003676">
    <property type="entry name" value="PRK05303.1"/>
    <property type="match status" value="1"/>
</dbReference>
<dbReference type="PANTHER" id="PTHR30381">
    <property type="entry name" value="FLAGELLAR P-RING PERIPLASMIC PROTEIN FLGI"/>
    <property type="match status" value="1"/>
</dbReference>
<dbReference type="PANTHER" id="PTHR30381:SF0">
    <property type="entry name" value="FLAGELLAR P-RING PROTEIN"/>
    <property type="match status" value="1"/>
</dbReference>
<dbReference type="Pfam" id="PF02119">
    <property type="entry name" value="FlgI"/>
    <property type="match status" value="1"/>
</dbReference>
<dbReference type="PRINTS" id="PR01010">
    <property type="entry name" value="FLGPRINGFLGI"/>
</dbReference>
<keyword id="KW-0975">Bacterial flagellum</keyword>
<keyword id="KW-0574">Periplasm</keyword>
<keyword id="KW-0732">Signal</keyword>
<organism>
    <name type="scientific">Salmonella choleraesuis (strain SC-B67)</name>
    <dbReference type="NCBI Taxonomy" id="321314"/>
    <lineage>
        <taxon>Bacteria</taxon>
        <taxon>Pseudomonadati</taxon>
        <taxon>Pseudomonadota</taxon>
        <taxon>Gammaproteobacteria</taxon>
        <taxon>Enterobacterales</taxon>
        <taxon>Enterobacteriaceae</taxon>
        <taxon>Salmonella</taxon>
    </lineage>
</organism>
<name>FLGI_SALCH</name>
<protein>
    <recommendedName>
        <fullName evidence="1">Flagellar P-ring protein</fullName>
    </recommendedName>
    <alternativeName>
        <fullName evidence="1">Basal body P-ring protein</fullName>
    </alternativeName>
</protein>
<reference key="1">
    <citation type="journal article" date="2005" name="Nucleic Acids Res.">
        <title>The genome sequence of Salmonella enterica serovar Choleraesuis, a highly invasive and resistant zoonotic pathogen.</title>
        <authorList>
            <person name="Chiu C.-H."/>
            <person name="Tang P."/>
            <person name="Chu C."/>
            <person name="Hu S."/>
            <person name="Bao Q."/>
            <person name="Yu J."/>
            <person name="Chou Y.-Y."/>
            <person name="Wang H.-S."/>
            <person name="Lee Y.-S."/>
        </authorList>
    </citation>
    <scope>NUCLEOTIDE SEQUENCE [LARGE SCALE GENOMIC DNA]</scope>
    <source>
        <strain>SC-B67</strain>
    </source>
</reference>
<evidence type="ECO:0000255" key="1">
    <source>
        <dbReference type="HAMAP-Rule" id="MF_00416"/>
    </source>
</evidence>
<proteinExistence type="inferred from homology"/>
<accession>Q57QH7</accession>
<sequence length="367" mass="38459">MYVFKALAGIVLALVATLAHAERIRDLTSVQGVRENSLIGYGLVVGLDGTGDQTTQTPFTTQTLNNMLSQLGITVPTGTNMQLKNVAAVMVTASYPPFARQGQTIDVVVSSMGNAKSLRGGTLLMTPLKGVDSQVYALAQGNILVGGVGASAGGSSVQVNQLNGGRITNGAIIERELPTQFGAGNTINLQLNDEDFTMAQQITDAINRARGYGSATALDARTVQVRVPSGNSSQVRFLADIQNMEVNVTPQDAKVVINSRTGSVVMNREVTLDSCAVAQGNLSVTVNRQLNVNQPNTPFGGGQTVVTPQTQIDLRQSGGSLQSVRSSANLNSVVRALNALGATPMDLMSILQSMQSAGCLRAKLEII</sequence>
<comment type="function">
    <text evidence="1">Assembles around the rod to form the L-ring and probably protects the motor/basal body from shearing forces during rotation.</text>
</comment>
<comment type="subunit">
    <text evidence="1">The basal body constitutes a major portion of the flagellar organelle and consists of four rings (L,P,S, and M) mounted on a central rod.</text>
</comment>
<comment type="subcellular location">
    <subcellularLocation>
        <location evidence="1">Periplasm</location>
    </subcellularLocation>
    <subcellularLocation>
        <location evidence="1">Bacterial flagellum basal body</location>
    </subcellularLocation>
</comment>
<comment type="similarity">
    <text evidence="1">Belongs to the FlgI family.</text>
</comment>